<evidence type="ECO:0000305" key="1"/>
<name>RL14_TETTS</name>
<accession>Q24C27</accession>
<keyword id="KW-0002">3D-structure</keyword>
<keyword id="KW-1185">Reference proteome</keyword>
<keyword id="KW-0687">Ribonucleoprotein</keyword>
<keyword id="KW-0689">Ribosomal protein</keyword>
<comment type="similarity">
    <text evidence="1">Belongs to the eukaryotic ribosomal protein eL14 family.</text>
</comment>
<comment type="sequence caution" evidence="1">
    <conflict type="erroneous gene model prediction">
        <sequence resource="EMBL-CDS" id="EAS05411"/>
    </conflict>
</comment>
<dbReference type="EMBL" id="GG662372">
    <property type="protein sequence ID" value="EAS05411.3"/>
    <property type="status" value="ALT_SEQ"/>
    <property type="molecule type" value="Genomic_DNA"/>
</dbReference>
<dbReference type="RefSeq" id="XP_001025656.3">
    <property type="nucleotide sequence ID" value="XM_001025656.3"/>
</dbReference>
<dbReference type="PDB" id="4ADX">
    <property type="method" value="EM"/>
    <property type="resolution" value="6.60 A"/>
    <property type="chains" value="7=1-126"/>
</dbReference>
<dbReference type="PDB" id="4V8P">
    <property type="method" value="X-ray"/>
    <property type="resolution" value="3.52 A"/>
    <property type="chains" value="AF/DF/FF/HF=1-126"/>
</dbReference>
<dbReference type="PDBsum" id="4ADX"/>
<dbReference type="PDBsum" id="4V8P"/>
<dbReference type="SMR" id="Q24C27"/>
<dbReference type="FunCoup" id="Q24C27">
    <property type="interactions" value="492"/>
</dbReference>
<dbReference type="IntAct" id="Q24C27">
    <property type="interactions" value="1"/>
</dbReference>
<dbReference type="STRING" id="312017.Q24C27"/>
<dbReference type="EnsemblProtists" id="EAS05411">
    <property type="protein sequence ID" value="EAS05411"/>
    <property type="gene ID" value="TTHERM_00697490"/>
</dbReference>
<dbReference type="KEGG" id="tet:TTHERM_00697490"/>
<dbReference type="eggNOG" id="KOG3421">
    <property type="taxonomic scope" value="Eukaryota"/>
</dbReference>
<dbReference type="HOGENOM" id="CLU_082438_2_1_1"/>
<dbReference type="InParanoid" id="Q24C27"/>
<dbReference type="OMA" id="KLCFVVD"/>
<dbReference type="OrthoDB" id="1875589at2759"/>
<dbReference type="EvolutionaryTrace" id="Q24C27"/>
<dbReference type="Proteomes" id="UP000009168">
    <property type="component" value="Unassembled WGS sequence"/>
</dbReference>
<dbReference type="GO" id="GO:0022625">
    <property type="term" value="C:cytosolic large ribosomal subunit"/>
    <property type="evidence" value="ECO:0007669"/>
    <property type="project" value="TreeGrafter"/>
</dbReference>
<dbReference type="GO" id="GO:0003723">
    <property type="term" value="F:RNA binding"/>
    <property type="evidence" value="ECO:0007669"/>
    <property type="project" value="InterPro"/>
</dbReference>
<dbReference type="GO" id="GO:0003735">
    <property type="term" value="F:structural constituent of ribosome"/>
    <property type="evidence" value="ECO:0007669"/>
    <property type="project" value="InterPro"/>
</dbReference>
<dbReference type="GO" id="GO:0042273">
    <property type="term" value="P:ribosomal large subunit biogenesis"/>
    <property type="evidence" value="ECO:0007669"/>
    <property type="project" value="TreeGrafter"/>
</dbReference>
<dbReference type="GO" id="GO:0006412">
    <property type="term" value="P:translation"/>
    <property type="evidence" value="ECO:0007669"/>
    <property type="project" value="InterPro"/>
</dbReference>
<dbReference type="CDD" id="cd23702">
    <property type="entry name" value="eL14"/>
    <property type="match status" value="1"/>
</dbReference>
<dbReference type="Gene3D" id="2.30.30.30">
    <property type="match status" value="1"/>
</dbReference>
<dbReference type="Gene3D" id="6.10.250.2270">
    <property type="match status" value="1"/>
</dbReference>
<dbReference type="InterPro" id="IPR005824">
    <property type="entry name" value="KOW"/>
</dbReference>
<dbReference type="InterPro" id="IPR014722">
    <property type="entry name" value="Rib_uL2_dom2"/>
</dbReference>
<dbReference type="InterPro" id="IPR039660">
    <property type="entry name" value="Ribosomal_eL14"/>
</dbReference>
<dbReference type="InterPro" id="IPR002784">
    <property type="entry name" value="Ribosomal_eL14_dom"/>
</dbReference>
<dbReference type="InterPro" id="IPR008991">
    <property type="entry name" value="Translation_prot_SH3-like_sf"/>
</dbReference>
<dbReference type="PANTHER" id="PTHR11127">
    <property type="entry name" value="60S RIBOSOMAL PROTEIN L14"/>
    <property type="match status" value="1"/>
</dbReference>
<dbReference type="PANTHER" id="PTHR11127:SF2">
    <property type="entry name" value="LARGE RIBOSOMAL SUBUNIT PROTEIN EL14"/>
    <property type="match status" value="1"/>
</dbReference>
<dbReference type="Pfam" id="PF00467">
    <property type="entry name" value="KOW"/>
    <property type="match status" value="1"/>
</dbReference>
<dbReference type="Pfam" id="PF01929">
    <property type="entry name" value="Ribosomal_L14e"/>
    <property type="match status" value="1"/>
</dbReference>
<dbReference type="SUPFAM" id="SSF50104">
    <property type="entry name" value="Translation proteins SH3-like domain"/>
    <property type="match status" value="1"/>
</dbReference>
<proteinExistence type="evidence at protein level"/>
<protein>
    <recommendedName>
        <fullName evidence="1">Large ribosomal subunit protein eL14</fullName>
    </recommendedName>
    <alternativeName>
        <fullName>60S ribosomal protein L14</fullName>
    </alternativeName>
</protein>
<gene>
    <name type="primary">RPL14</name>
    <name type="ORF">TTHERM_00697490A</name>
</gene>
<sequence>MVFNKFVQVGRVVYINYGADKGKLAVIVNIINQNRILIDGEHIVRQVIPIRRVHLTKFQIDNVELNQRTVLLKKKIAKFDLTKKYAETSFAKKQAIKTKRANLGDFDRFRVMVLKKKLARTSAKSK</sequence>
<reference key="1">
    <citation type="journal article" date="2006" name="PLoS Biol.">
        <title>Macronuclear genome sequence of the ciliate Tetrahymena thermophila, a model eukaryote.</title>
        <authorList>
            <person name="Eisen J.A."/>
            <person name="Coyne R.S."/>
            <person name="Wu M."/>
            <person name="Wu D."/>
            <person name="Thiagarajan M."/>
            <person name="Wortman J.R."/>
            <person name="Badger J.H."/>
            <person name="Ren Q."/>
            <person name="Amedeo P."/>
            <person name="Jones K.M."/>
            <person name="Tallon L.J."/>
            <person name="Delcher A.L."/>
            <person name="Salzberg S.L."/>
            <person name="Silva J.C."/>
            <person name="Haas B.J."/>
            <person name="Majoros W.H."/>
            <person name="Farzad M."/>
            <person name="Carlton J.M."/>
            <person name="Smith R.K. Jr."/>
            <person name="Garg J."/>
            <person name="Pearlman R.E."/>
            <person name="Karrer K.M."/>
            <person name="Sun L."/>
            <person name="Manning G."/>
            <person name="Elde N.C."/>
            <person name="Turkewitz A.P."/>
            <person name="Asai D.J."/>
            <person name="Wilkes D.E."/>
            <person name="Wang Y."/>
            <person name="Cai H."/>
            <person name="Collins K."/>
            <person name="Stewart B.A."/>
            <person name="Lee S.R."/>
            <person name="Wilamowska K."/>
            <person name="Weinberg Z."/>
            <person name="Ruzzo W.L."/>
            <person name="Wloga D."/>
            <person name="Gaertig J."/>
            <person name="Frankel J."/>
            <person name="Tsao C.-C."/>
            <person name="Gorovsky M.A."/>
            <person name="Keeling P.J."/>
            <person name="Waller R.F."/>
            <person name="Patron N.J."/>
            <person name="Cherry J.M."/>
            <person name="Stover N.A."/>
            <person name="Krieger C.J."/>
            <person name="del Toro C."/>
            <person name="Ryder H.F."/>
            <person name="Williamson S.C."/>
            <person name="Barbeau R.A."/>
            <person name="Hamilton E.P."/>
            <person name="Orias E."/>
        </authorList>
    </citation>
    <scope>NUCLEOTIDE SEQUENCE [LARGE SCALE GENOMIC DNA]</scope>
    <source>
        <strain>SB210</strain>
    </source>
</reference>
<organism>
    <name type="scientific">Tetrahymena thermophila (strain SB210)</name>
    <dbReference type="NCBI Taxonomy" id="312017"/>
    <lineage>
        <taxon>Eukaryota</taxon>
        <taxon>Sar</taxon>
        <taxon>Alveolata</taxon>
        <taxon>Ciliophora</taxon>
        <taxon>Intramacronucleata</taxon>
        <taxon>Oligohymenophorea</taxon>
        <taxon>Hymenostomatida</taxon>
        <taxon>Tetrahymenina</taxon>
        <taxon>Tetrahymenidae</taxon>
        <taxon>Tetrahymena</taxon>
    </lineage>
</organism>
<feature type="chain" id="PRO_0000413498" description="Large ribosomal subunit protein eL14">
    <location>
        <begin position="1"/>
        <end position="126"/>
    </location>
</feature>